<feature type="transit peptide" description="Chloroplast" evidence="2">
    <location>
        <begin position="1" status="less than"/>
        <end position="13"/>
    </location>
</feature>
<feature type="chain" id="PRO_0000031540" description="Ribulose bisphosphate carboxylase small subunit, chloroplastic 1">
    <location>
        <begin position="14"/>
        <end position="136"/>
    </location>
</feature>
<feature type="non-terminal residue">
    <location>
        <position position="1"/>
    </location>
</feature>
<comment type="function">
    <text evidence="1">RuBisCO catalyzes two reactions: the carboxylation of D-ribulose 1,5-bisphosphate, the primary event in carbon dioxide fixation, as well as the oxidative fragmentation of the pentose substrate. Both reactions occur simultaneously and in competition at the same active site. Although the small subunit is not catalytic it is essential for maximal activity.</text>
</comment>
<comment type="subunit">
    <text evidence="1">Heterohexadecamer of 8 large and 8 small subunits.</text>
</comment>
<comment type="subcellular location">
    <subcellularLocation>
        <location evidence="1">Plastid</location>
        <location evidence="1">Chloroplast</location>
    </subcellularLocation>
</comment>
<comment type="miscellaneous">
    <text evidence="1">The basic functional RuBisCO is composed of a large chain homodimer in a 'head-to-tail' conformation. In form I RuBisCO this homodimer is arranged in a barrel-like tetramer with the small subunits forming a tetrameric 'cap' on each end of the 'barrel'.</text>
</comment>
<comment type="similarity">
    <text evidence="1">Belongs to the RuBisCO small chain family.</text>
</comment>
<accession>P00868</accession>
<organism>
    <name type="scientific">Pisum sativum</name>
    <name type="common">Garden pea</name>
    <name type="synonym">Lathyrus oleraceus</name>
    <dbReference type="NCBI Taxonomy" id="3888"/>
    <lineage>
        <taxon>Eukaryota</taxon>
        <taxon>Viridiplantae</taxon>
        <taxon>Streptophyta</taxon>
        <taxon>Embryophyta</taxon>
        <taxon>Tracheophyta</taxon>
        <taxon>Spermatophyta</taxon>
        <taxon>Magnoliopsida</taxon>
        <taxon>eudicotyledons</taxon>
        <taxon>Gunneridae</taxon>
        <taxon>Pentapetalae</taxon>
        <taxon>rosids</taxon>
        <taxon>fabids</taxon>
        <taxon>Fabales</taxon>
        <taxon>Fabaceae</taxon>
        <taxon>Papilionoideae</taxon>
        <taxon>50 kb inversion clade</taxon>
        <taxon>NPAAA clade</taxon>
        <taxon>Hologalegina</taxon>
        <taxon>IRL clade</taxon>
        <taxon>Fabeae</taxon>
        <taxon>Pisum</taxon>
    </lineage>
</organism>
<evidence type="ECO:0000255" key="1">
    <source>
        <dbReference type="HAMAP-Rule" id="MF_00860"/>
    </source>
</evidence>
<evidence type="ECO:0000305" key="2"/>
<reference key="1">
    <citation type="journal article" date="1980" name="Nature">
        <title>Molecular cloning and sequencing of cDNA encoding the precursor to the small subunit of chloroplast ribulose-1,5-bisphosphate carboxylase.</title>
        <authorList>
            <person name="Bedbrook J.R."/>
            <person name="Smith S.M."/>
            <person name="Ellis R.J."/>
        </authorList>
    </citation>
    <scope>NUCLEOTIDE SEQUENCE [MRNA]</scope>
</reference>
<name>RBS1_PEA</name>
<gene>
    <name evidence="1" type="primary">RBCS1</name>
</gene>
<proteinExistence type="evidence at transcript level"/>
<sequence length="136" mass="15883">NTDITSNGERVKCMQVWPPIGKKKFETLSYLPPLTRDQLLKEVEYLLRKGWVPCLEFELLKGFVYGEHNKSPRYYDGRYWTMWKLPMFGTTDPAQVVKEVDEVVAAYPEAFVRVIGFNNVRQVQCISFIAHTPESY</sequence>
<dbReference type="EMBL" id="J01256">
    <property type="protein sequence ID" value="AAA33684.1"/>
    <property type="molecule type" value="mRNA"/>
</dbReference>
<dbReference type="PIR" id="A01087">
    <property type="entry name" value="RKPMS"/>
</dbReference>
<dbReference type="SMR" id="P00868"/>
<dbReference type="DIP" id="DIP-609N"/>
<dbReference type="IntAct" id="P00868">
    <property type="interactions" value="2"/>
</dbReference>
<dbReference type="MINT" id="P00868"/>
<dbReference type="GO" id="GO:0009507">
    <property type="term" value="C:chloroplast"/>
    <property type="evidence" value="ECO:0007669"/>
    <property type="project" value="UniProtKB-SubCell"/>
</dbReference>
<dbReference type="GO" id="GO:0009853">
    <property type="term" value="P:photorespiration"/>
    <property type="evidence" value="ECO:0007669"/>
    <property type="project" value="UniProtKB-KW"/>
</dbReference>
<dbReference type="GO" id="GO:0019253">
    <property type="term" value="P:reductive pentose-phosphate cycle"/>
    <property type="evidence" value="ECO:0007669"/>
    <property type="project" value="UniProtKB-KW"/>
</dbReference>
<dbReference type="CDD" id="cd03527">
    <property type="entry name" value="RuBisCO_small"/>
    <property type="match status" value="1"/>
</dbReference>
<dbReference type="FunFam" id="3.30.190.10:FF:000001">
    <property type="entry name" value="Ribulose bisphosphate carboxylase small chain, chloroplastic"/>
    <property type="match status" value="1"/>
</dbReference>
<dbReference type="Gene3D" id="3.30.190.10">
    <property type="entry name" value="Ribulose bisphosphate carboxylase, small subunit"/>
    <property type="match status" value="1"/>
</dbReference>
<dbReference type="HAMAP" id="MF_00859">
    <property type="entry name" value="RuBisCO_S_bact"/>
    <property type="match status" value="1"/>
</dbReference>
<dbReference type="InterPro" id="IPR024681">
    <property type="entry name" value="RuBisCO_ssu"/>
</dbReference>
<dbReference type="InterPro" id="IPR000894">
    <property type="entry name" value="RuBisCO_ssu_dom"/>
</dbReference>
<dbReference type="InterPro" id="IPR036385">
    <property type="entry name" value="RuBisCO_ssu_sf"/>
</dbReference>
<dbReference type="PANTHER" id="PTHR31262">
    <property type="entry name" value="RIBULOSE BISPHOSPHATE CARBOXYLASE SMALL CHAIN 1, CHLOROPLASTIC"/>
    <property type="match status" value="1"/>
</dbReference>
<dbReference type="PANTHER" id="PTHR31262:SF19">
    <property type="entry name" value="RIBULOSE BISPHOSPHATE CARBOXYLASE SMALL SUBUNIT, CHLOROPLASTIC 2"/>
    <property type="match status" value="1"/>
</dbReference>
<dbReference type="Pfam" id="PF00101">
    <property type="entry name" value="RuBisCO_small"/>
    <property type="match status" value="1"/>
</dbReference>
<dbReference type="PRINTS" id="PR00152">
    <property type="entry name" value="RUBISCOSMALL"/>
</dbReference>
<dbReference type="SMART" id="SM00961">
    <property type="entry name" value="RuBisCO_small"/>
    <property type="match status" value="1"/>
</dbReference>
<dbReference type="SUPFAM" id="SSF55239">
    <property type="entry name" value="RuBisCO, small subunit"/>
    <property type="match status" value="1"/>
</dbReference>
<protein>
    <recommendedName>
        <fullName evidence="1">Ribulose bisphosphate carboxylase small subunit, chloroplastic 1</fullName>
        <shortName evidence="1">RuBisCO small subunit 1</shortName>
    </recommendedName>
    <alternativeName>
        <fullName>PSSU1</fullName>
    </alternativeName>
</protein>
<keyword id="KW-0113">Calvin cycle</keyword>
<keyword id="KW-0120">Carbon dioxide fixation</keyword>
<keyword id="KW-0150">Chloroplast</keyword>
<keyword id="KW-0601">Photorespiration</keyword>
<keyword id="KW-0602">Photosynthesis</keyword>
<keyword id="KW-0934">Plastid</keyword>
<keyword id="KW-0809">Transit peptide</keyword>